<accession>Q0BX04</accession>
<keyword id="KW-0067">ATP-binding</keyword>
<keyword id="KW-0436">Ligase</keyword>
<keyword id="KW-0547">Nucleotide-binding</keyword>
<keyword id="KW-0554">One-carbon metabolism</keyword>
<keyword id="KW-1185">Reference proteome</keyword>
<reference key="1">
    <citation type="journal article" date="2006" name="J. Bacteriol.">
        <title>Comparative genomic evidence for a close relationship between the dimorphic prosthecate bacteria Hyphomonas neptunium and Caulobacter crescentus.</title>
        <authorList>
            <person name="Badger J.H."/>
            <person name="Hoover T.R."/>
            <person name="Brun Y.V."/>
            <person name="Weiner R.M."/>
            <person name="Laub M.T."/>
            <person name="Alexandre G."/>
            <person name="Mrazek J."/>
            <person name="Ren Q."/>
            <person name="Paulsen I.T."/>
            <person name="Nelson K.E."/>
            <person name="Khouri H.M."/>
            <person name="Radune D."/>
            <person name="Sosa J."/>
            <person name="Dodson R.J."/>
            <person name="Sullivan S.A."/>
            <person name="Rosovitz M.J."/>
            <person name="Madupu R."/>
            <person name="Brinkac L.M."/>
            <person name="Durkin A.S."/>
            <person name="Daugherty S.C."/>
            <person name="Kothari S.P."/>
            <person name="Giglio M.G."/>
            <person name="Zhou L."/>
            <person name="Haft D.H."/>
            <person name="Selengut J.D."/>
            <person name="Davidsen T.M."/>
            <person name="Yang Q."/>
            <person name="Zafar N."/>
            <person name="Ward N.L."/>
        </authorList>
    </citation>
    <scope>NUCLEOTIDE SEQUENCE [LARGE SCALE GENOMIC DNA]</scope>
    <source>
        <strain>ATCC 15444</strain>
    </source>
</reference>
<proteinExistence type="inferred from homology"/>
<gene>
    <name evidence="1" type="primary">fhs</name>
    <name type="ordered locus">HNE_3316</name>
</gene>
<organism>
    <name type="scientific">Hyphomonas neptunium (strain ATCC 15444)</name>
    <dbReference type="NCBI Taxonomy" id="228405"/>
    <lineage>
        <taxon>Bacteria</taxon>
        <taxon>Pseudomonadati</taxon>
        <taxon>Pseudomonadota</taxon>
        <taxon>Alphaproteobacteria</taxon>
        <taxon>Hyphomonadales</taxon>
        <taxon>Hyphomonadaceae</taxon>
        <taxon>Hyphomonas</taxon>
    </lineage>
</organism>
<name>FTHS_HYPNA</name>
<dbReference type="EC" id="6.3.4.3" evidence="1"/>
<dbReference type="EMBL" id="CP000158">
    <property type="protein sequence ID" value="ABI77946.1"/>
    <property type="molecule type" value="Genomic_DNA"/>
</dbReference>
<dbReference type="RefSeq" id="WP_011648284.1">
    <property type="nucleotide sequence ID" value="NC_008358.1"/>
</dbReference>
<dbReference type="SMR" id="Q0BX04"/>
<dbReference type="STRING" id="228405.HNE_3316"/>
<dbReference type="KEGG" id="hne:HNE_3316"/>
<dbReference type="eggNOG" id="COG2759">
    <property type="taxonomic scope" value="Bacteria"/>
</dbReference>
<dbReference type="HOGENOM" id="CLU_003601_3_3_5"/>
<dbReference type="UniPathway" id="UPA00193"/>
<dbReference type="Proteomes" id="UP000001959">
    <property type="component" value="Chromosome"/>
</dbReference>
<dbReference type="GO" id="GO:0005524">
    <property type="term" value="F:ATP binding"/>
    <property type="evidence" value="ECO:0007669"/>
    <property type="project" value="UniProtKB-UniRule"/>
</dbReference>
<dbReference type="GO" id="GO:0004329">
    <property type="term" value="F:formate-tetrahydrofolate ligase activity"/>
    <property type="evidence" value="ECO:0007669"/>
    <property type="project" value="UniProtKB-UniRule"/>
</dbReference>
<dbReference type="GO" id="GO:0035999">
    <property type="term" value="P:tetrahydrofolate interconversion"/>
    <property type="evidence" value="ECO:0007669"/>
    <property type="project" value="UniProtKB-UniRule"/>
</dbReference>
<dbReference type="CDD" id="cd00477">
    <property type="entry name" value="FTHFS"/>
    <property type="match status" value="1"/>
</dbReference>
<dbReference type="FunFam" id="3.30.1510.10:FF:000001">
    <property type="entry name" value="Formate--tetrahydrofolate ligase"/>
    <property type="match status" value="1"/>
</dbReference>
<dbReference type="FunFam" id="3.10.410.10:FF:000001">
    <property type="entry name" value="Putative formate--tetrahydrofolate ligase"/>
    <property type="match status" value="1"/>
</dbReference>
<dbReference type="Gene3D" id="3.30.1510.10">
    <property type="entry name" value="Domain 2, N(10)-formyltetrahydrofolate synthetase"/>
    <property type="match status" value="1"/>
</dbReference>
<dbReference type="Gene3D" id="3.10.410.10">
    <property type="entry name" value="Formyltetrahydrofolate synthetase, domain 3"/>
    <property type="match status" value="1"/>
</dbReference>
<dbReference type="Gene3D" id="3.40.50.300">
    <property type="entry name" value="P-loop containing nucleotide triphosphate hydrolases"/>
    <property type="match status" value="1"/>
</dbReference>
<dbReference type="HAMAP" id="MF_01543">
    <property type="entry name" value="FTHFS"/>
    <property type="match status" value="1"/>
</dbReference>
<dbReference type="InterPro" id="IPR000559">
    <property type="entry name" value="Formate_THF_ligase"/>
</dbReference>
<dbReference type="InterPro" id="IPR020628">
    <property type="entry name" value="Formate_THF_ligase_CS"/>
</dbReference>
<dbReference type="InterPro" id="IPR027417">
    <property type="entry name" value="P-loop_NTPase"/>
</dbReference>
<dbReference type="NCBIfam" id="NF010030">
    <property type="entry name" value="PRK13505.1"/>
    <property type="match status" value="1"/>
</dbReference>
<dbReference type="Pfam" id="PF01268">
    <property type="entry name" value="FTHFS"/>
    <property type="match status" value="1"/>
</dbReference>
<dbReference type="SUPFAM" id="SSF52540">
    <property type="entry name" value="P-loop containing nucleoside triphosphate hydrolases"/>
    <property type="match status" value="1"/>
</dbReference>
<dbReference type="PROSITE" id="PS00721">
    <property type="entry name" value="FTHFS_1"/>
    <property type="match status" value="1"/>
</dbReference>
<dbReference type="PROSITE" id="PS00722">
    <property type="entry name" value="FTHFS_2"/>
    <property type="match status" value="1"/>
</dbReference>
<comment type="catalytic activity">
    <reaction evidence="1">
        <text>(6S)-5,6,7,8-tetrahydrofolate + formate + ATP = (6R)-10-formyltetrahydrofolate + ADP + phosphate</text>
        <dbReference type="Rhea" id="RHEA:20221"/>
        <dbReference type="ChEBI" id="CHEBI:15740"/>
        <dbReference type="ChEBI" id="CHEBI:30616"/>
        <dbReference type="ChEBI" id="CHEBI:43474"/>
        <dbReference type="ChEBI" id="CHEBI:57453"/>
        <dbReference type="ChEBI" id="CHEBI:195366"/>
        <dbReference type="ChEBI" id="CHEBI:456216"/>
        <dbReference type="EC" id="6.3.4.3"/>
    </reaction>
</comment>
<comment type="pathway">
    <text evidence="1">One-carbon metabolism; tetrahydrofolate interconversion.</text>
</comment>
<comment type="similarity">
    <text evidence="1">Belongs to the formate--tetrahydrofolate ligase family.</text>
</comment>
<feature type="chain" id="PRO_0000300523" description="Formate--tetrahydrofolate ligase">
    <location>
        <begin position="1"/>
        <end position="556"/>
    </location>
</feature>
<feature type="binding site" evidence="1">
    <location>
        <begin position="65"/>
        <end position="72"/>
    </location>
    <ligand>
        <name>ATP</name>
        <dbReference type="ChEBI" id="CHEBI:30616"/>
    </ligand>
</feature>
<sequence length="556" mass="58754">MASDIEIARGAKKKPIQEVAARAGVSPENLIPYGHDKAKISAAHLAGLAHNATGKLILVTAINPTPAGEGKTTTSIGLADAMNRIGANTLLCLREPSLGPCFGMKGGATGGGLAQIVPMEDINLHFTGDFHAITSAHNLLSTMIDNHIHWGGEPKLEAVRTSWRRVMDMNDRSLRNIVSGLGGPGNGSPSETGFDITVASEVMAILCLATDAEDLEARLARIIVGYTSEKEAVTAADIKATGAMMALLRDAMLPNLVQTLENNPCLVHGGPFANIAHGCNSVMATSAALKMADYVVTEAGFGADLGAEKFLNIKCRQAGLAPDAVVLVATIRALKMHGGLGKNDLGKVSYEALESGLENLGRHIGNLRSFGLPVIVAINRFTTDTEGEVHALQAYCEKLGVPVSLCTHWAEGGKGTEDLARGVTALIEKGEADFKPLYPDDMPLLEKIETVAKSIYRAGRVETTRAVRNQLAAWEKAGFGHLPVCMAKTQYSFSTDPALLGAPEGHVVRLREVRLAAGAGFVVAICGDIMTMPGLPRRPAAEHIHLNRQGQIEGLN</sequence>
<protein>
    <recommendedName>
        <fullName evidence="1">Formate--tetrahydrofolate ligase</fullName>
        <ecNumber evidence="1">6.3.4.3</ecNumber>
    </recommendedName>
    <alternativeName>
        <fullName evidence="1">Formyltetrahydrofolate synthetase</fullName>
        <shortName evidence="1">FHS</shortName>
        <shortName evidence="1">FTHFS</shortName>
    </alternativeName>
</protein>
<evidence type="ECO:0000255" key="1">
    <source>
        <dbReference type="HAMAP-Rule" id="MF_01543"/>
    </source>
</evidence>